<reference key="1">
    <citation type="journal article" date="2006" name="FEBS Lett.">
        <title>Molecular characterization of a new scorpion venom lipolysis activating peptide: evidence for disulfide bridge-mediated functional switch of peptides.</title>
        <authorList>
            <person name="Zhu S."/>
            <person name="Gao B."/>
        </authorList>
    </citation>
    <scope>NUCLEOTIDE SEQUENCE [GENOMIC DNA / MRNA]</scope>
    <scope>AMIDATION AT ASN-96</scope>
    <scope>RNA EDITING</scope>
</reference>
<reference key="2">
    <citation type="journal article" date="2006" name="Peptides">
        <title>Molecular dissection of venom from Chinese scorpion Mesobuthus martensii: identification and characterization of four novel disulfide-bridged venom peptides.</title>
        <authorList>
            <person name="Zeng X.-C."/>
            <person name="Luo F."/>
            <person name="Li W.-X."/>
        </authorList>
    </citation>
    <scope>NUCLEOTIDE SEQUENCE [MRNA]</scope>
    <source>
        <tissue>Venom gland</tissue>
    </source>
</reference>
<reference key="3">
    <citation type="submission" date="2003-04" db="EMBL/GenBank/DDBJ databases">
        <title>Cloning and characterizing of a new scorpion toxin from Buthus martensii Karsch.</title>
        <authorList>
            <person name="Jiang D.-H."/>
            <person name="Cao Z."/>
            <person name="Li W.-X."/>
        </authorList>
    </citation>
    <scope>NUCLEOTIDE SEQUENCE [MRNA]</scope>
    <source>
        <tissue>Venom gland</tissue>
    </source>
</reference>
<sequence>MMKFVLFGMIVILFSLMGSIRGDDDPGNYPTNAYGNKYYCTILGENEYCRKICKLHGVTYGYCYNSRCWCEKLEDKDVTIWNAVKNHCTNTILYPNGK</sequence>
<keyword id="KW-0027">Amidation</keyword>
<keyword id="KW-1015">Disulfide bond</keyword>
<keyword id="KW-1213">G-protein coupled receptor impairing toxin</keyword>
<keyword id="KW-0872">Ion channel impairing toxin</keyword>
<keyword id="KW-0528">Neurotoxin</keyword>
<keyword id="KW-0632">Potassium channel impairing toxin</keyword>
<keyword id="KW-0691">RNA editing</keyword>
<keyword id="KW-0964">Secreted</keyword>
<keyword id="KW-0732">Signal</keyword>
<keyword id="KW-0800">Toxin</keyword>
<keyword id="KW-1220">Voltage-gated potassium channel impairing toxin</keyword>
<keyword id="KW-0738">Voltage-gated sodium channel impairing toxin</keyword>
<name>LV1A_OLIMR</name>
<protein>
    <recommendedName>
        <fullName>Lipolysis-activating peptide 1-alpha chain</fullName>
        <shortName>BmLVP1-alpha</shortName>
        <shortName>LVP1-alpha</shortName>
    </recommendedName>
    <component>
        <recommendedName>
            <fullName>Neurotoxin BmKBTx</fullName>
            <shortName>BmKBT</shortName>
        </recommendedName>
    </component>
</protein>
<proteinExistence type="evidence at protein level"/>
<feature type="signal peptide" evidence="1">
    <location>
        <begin position="1"/>
        <end position="22"/>
    </location>
</feature>
<feature type="chain" id="PRO_0000394865" description="Lipolysis-activating peptide 1-alpha chain">
    <location>
        <begin position="23"/>
        <end position="96"/>
    </location>
</feature>
<feature type="chain" id="PRO_0000234389" description="Neurotoxin BmKBTx">
    <location>
        <begin position="23"/>
        <end position="80"/>
    </location>
</feature>
<feature type="domain" description="LCN-type CS-alpha/beta" evidence="3">
    <location>
        <begin position="26"/>
        <end position="89"/>
    </location>
</feature>
<feature type="site" description="Important for inhibiting sodium channels, in non-edited version" evidence="1">
    <location>
        <position position="43"/>
    </location>
</feature>
<feature type="site" description="Important for inhibiting sodium channels, in non-edited version" evidence="1">
    <location>
        <position position="46"/>
    </location>
</feature>
<feature type="site" description="Important for blocking potassium channels, in non-edited version" evidence="1">
    <location>
        <position position="48"/>
    </location>
</feature>
<feature type="site" description="Important for blocking potassium channels, in non-edited version" evidence="1">
    <location>
        <position position="51"/>
    </location>
</feature>
<feature type="site" description="Important for inhibiting sodium channels, in non-edited version" evidence="1">
    <location>
        <position position="62"/>
    </location>
</feature>
<feature type="site" description="Important for inhibiting sodium channels, in non-edited version" evidence="1">
    <location>
        <position position="64"/>
    </location>
</feature>
<feature type="modified residue" description="Asparagine amide" evidence="7">
    <location>
        <position position="96"/>
    </location>
</feature>
<feature type="disulfide bond" evidence="3">
    <location>
        <begin position="40"/>
        <end position="63"/>
    </location>
</feature>
<feature type="disulfide bond" evidence="3">
    <location>
        <begin position="49"/>
        <end position="68"/>
    </location>
</feature>
<feature type="disulfide bond" evidence="3">
    <location>
        <begin position="53"/>
        <end position="70"/>
    </location>
</feature>
<feature type="disulfide bond" description="Interchain (with C-90 in BmLVP1 chain beta, in non-edited version)" evidence="5">
    <location>
        <position position="88"/>
    </location>
</feature>
<feature type="sequence conflict" description="In Ref. 2; AAP41418." evidence="5" ref="2">
    <original>V</original>
    <variation>L</variation>
    <location>
        <position position="5"/>
    </location>
</feature>
<feature type="sequence conflict" description="In Ref. 2; AAP41418." evidence="5" ref="2">
    <original>I</original>
    <variation>F</variation>
    <location>
        <position position="10"/>
    </location>
</feature>
<evidence type="ECO:0000250" key="1"/>
<evidence type="ECO:0000250" key="2">
    <source>
        <dbReference type="UniProtKB" id="P84810"/>
    </source>
</evidence>
<evidence type="ECO:0000255" key="3">
    <source>
        <dbReference type="PROSITE-ProRule" id="PRU01210"/>
    </source>
</evidence>
<evidence type="ECO:0000269" key="4">
    <source>
    </source>
</evidence>
<evidence type="ECO:0000305" key="5"/>
<evidence type="ECO:0000305" key="6">
    <source>
    </source>
</evidence>
<evidence type="ECO:0000305" key="7">
    <source>
    </source>
</evidence>
<dbReference type="EMBL" id="DQ872673">
    <property type="protein sequence ID" value="ABJ09777.1"/>
    <property type="molecule type" value="Genomic_DNA"/>
</dbReference>
<dbReference type="EMBL" id="AF151798">
    <property type="protein sequence ID" value="AAP41418.2"/>
    <property type="molecule type" value="mRNA"/>
</dbReference>
<dbReference type="EMBL" id="AY282464">
    <property type="protein sequence ID" value="AAQ22733.1"/>
    <property type="molecule type" value="mRNA"/>
</dbReference>
<dbReference type="SMR" id="Q6WJF5"/>
<dbReference type="GO" id="GO:0005576">
    <property type="term" value="C:extracellular region"/>
    <property type="evidence" value="ECO:0007669"/>
    <property type="project" value="UniProtKB-SubCell"/>
</dbReference>
<dbReference type="GO" id="GO:0015459">
    <property type="term" value="F:potassium channel regulator activity"/>
    <property type="evidence" value="ECO:0007669"/>
    <property type="project" value="UniProtKB-KW"/>
</dbReference>
<dbReference type="GO" id="GO:0019871">
    <property type="term" value="F:sodium channel inhibitor activity"/>
    <property type="evidence" value="ECO:0007669"/>
    <property type="project" value="InterPro"/>
</dbReference>
<dbReference type="GO" id="GO:0090729">
    <property type="term" value="F:toxin activity"/>
    <property type="evidence" value="ECO:0007669"/>
    <property type="project" value="UniProtKB-KW"/>
</dbReference>
<dbReference type="CDD" id="cd23106">
    <property type="entry name" value="neurotoxins_LC_scorpion"/>
    <property type="match status" value="1"/>
</dbReference>
<dbReference type="Gene3D" id="3.30.30.10">
    <property type="entry name" value="Knottin, scorpion toxin-like"/>
    <property type="match status" value="1"/>
</dbReference>
<dbReference type="InterPro" id="IPR044062">
    <property type="entry name" value="LCN-type_CS_alpha_beta_dom"/>
</dbReference>
<dbReference type="InterPro" id="IPR036574">
    <property type="entry name" value="Scorpion_toxin-like_sf"/>
</dbReference>
<dbReference type="InterPro" id="IPR002061">
    <property type="entry name" value="Scorpion_toxinL/defensin"/>
</dbReference>
<dbReference type="Pfam" id="PF00537">
    <property type="entry name" value="Toxin_3"/>
    <property type="match status" value="1"/>
</dbReference>
<dbReference type="SUPFAM" id="SSF57095">
    <property type="entry name" value="Scorpion toxin-like"/>
    <property type="match status" value="1"/>
</dbReference>
<dbReference type="PROSITE" id="PS51863">
    <property type="entry name" value="LCN_CSAB"/>
    <property type="match status" value="1"/>
</dbReference>
<accession>Q6WJF5</accession>
<accession>A1YAC8</accession>
<comment type="function">
    <text evidence="2">The heterodimer non-edited LVP1 induces lipolysis in rat adipocytes. Induction of lipolysis by LVP1 appears to be mediated through the beta-2 adrenergic receptor pathway (ADRB2) (By similarity).</text>
</comment>
<comment type="function">
    <text evidence="2">The edited BmKBTx, similar to beta-toxins, may modulate voltage-gated sodium channels (Nav) and may block voltage-gated potassium channels (Kv) (Probable). Seems to be a rare component in the venom.</text>
</comment>
<comment type="subunit">
    <text evidence="2">Monomer (edited version) and heterodimer (non-edited version) of this alpha chain and a beta chain (AC Q95P90).</text>
</comment>
<comment type="subcellular location">
    <subcellularLocation>
        <location evidence="6 7">Secreted</location>
    </subcellularLocation>
</comment>
<comment type="tissue specificity">
    <text evidence="6 7">Expressed by the venom gland.</text>
</comment>
<comment type="domain">
    <text evidence="5">Has the structural arrangement of an alpha-helix connected to antiparallel beta-sheets by disulfide bonds (CS-alpha/beta).</text>
</comment>
<comment type="RNA editing">
    <location>
        <position position="81" evidence="4"/>
    </location>
    <text>The stop codon (UGA) at position 81 is created by RNA editing.</text>
</comment>
<comment type="similarity">
    <text evidence="5">Belongs to the long (3 C-C) scorpion toxin superfamily.</text>
</comment>
<gene>
    <name type="primary">LVP1a</name>
</gene>
<organism>
    <name type="scientific">Olivierus martensii</name>
    <name type="common">Manchurian scorpion</name>
    <name type="synonym">Mesobuthus martensii</name>
    <dbReference type="NCBI Taxonomy" id="34649"/>
    <lineage>
        <taxon>Eukaryota</taxon>
        <taxon>Metazoa</taxon>
        <taxon>Ecdysozoa</taxon>
        <taxon>Arthropoda</taxon>
        <taxon>Chelicerata</taxon>
        <taxon>Arachnida</taxon>
        <taxon>Scorpiones</taxon>
        <taxon>Buthida</taxon>
        <taxon>Buthoidea</taxon>
        <taxon>Buthidae</taxon>
        <taxon>Olivierus</taxon>
    </lineage>
</organism>